<keyword id="KW-0472">Membrane</keyword>
<keyword id="KW-0520">NAD</keyword>
<keyword id="KW-0521">NADP</keyword>
<keyword id="KW-0618">Plastoquinone</keyword>
<keyword id="KW-0874">Quinone</keyword>
<keyword id="KW-1185">Reference proteome</keyword>
<keyword id="KW-0793">Thylakoid</keyword>
<keyword id="KW-1278">Translocase</keyword>
<keyword id="KW-0812">Transmembrane</keyword>
<keyword id="KW-1133">Transmembrane helix</keyword>
<keyword id="KW-0813">Transport</keyword>
<accession>B1WZG2</accession>
<reference key="1">
    <citation type="journal article" date="2008" name="Proc. Natl. Acad. Sci. U.S.A.">
        <title>The genome of Cyanothece 51142, a unicellular diazotrophic cyanobacterium important in the marine nitrogen cycle.</title>
        <authorList>
            <person name="Welsh E.A."/>
            <person name="Liberton M."/>
            <person name="Stoeckel J."/>
            <person name="Loh T."/>
            <person name="Elvitigala T."/>
            <person name="Wang C."/>
            <person name="Wollam A."/>
            <person name="Fulton R.S."/>
            <person name="Clifton S.W."/>
            <person name="Jacobs J.M."/>
            <person name="Aurora R."/>
            <person name="Ghosh B.K."/>
            <person name="Sherman L.A."/>
            <person name="Smith R.D."/>
            <person name="Wilson R.K."/>
            <person name="Pakrasi H.B."/>
        </authorList>
    </citation>
    <scope>NUCLEOTIDE SEQUENCE [LARGE SCALE GENOMIC DNA]</scope>
    <source>
        <strain>ATCC 51142 / BH68</strain>
    </source>
</reference>
<comment type="function">
    <text evidence="1">NDH-1 shuttles electrons from an unknown electron donor, via FMN and iron-sulfur (Fe-S) centers, to quinones in the respiratory and/or the photosynthetic chain. The immediate electron acceptor for the enzyme in this species is believed to be plastoquinone. Couples the redox reaction to proton translocation, and thus conserves the redox energy in a proton gradient. Cyanobacterial NDH-1 also plays a role in inorganic carbon-concentration.</text>
</comment>
<comment type="catalytic activity">
    <reaction evidence="1">
        <text>a plastoquinone + NADH + (n+1) H(+)(in) = a plastoquinol + NAD(+) + n H(+)(out)</text>
        <dbReference type="Rhea" id="RHEA:42608"/>
        <dbReference type="Rhea" id="RHEA-COMP:9561"/>
        <dbReference type="Rhea" id="RHEA-COMP:9562"/>
        <dbReference type="ChEBI" id="CHEBI:15378"/>
        <dbReference type="ChEBI" id="CHEBI:17757"/>
        <dbReference type="ChEBI" id="CHEBI:57540"/>
        <dbReference type="ChEBI" id="CHEBI:57945"/>
        <dbReference type="ChEBI" id="CHEBI:62192"/>
    </reaction>
</comment>
<comment type="catalytic activity">
    <reaction evidence="1">
        <text>a plastoquinone + NADPH + (n+1) H(+)(in) = a plastoquinol + NADP(+) + n H(+)(out)</text>
        <dbReference type="Rhea" id="RHEA:42612"/>
        <dbReference type="Rhea" id="RHEA-COMP:9561"/>
        <dbReference type="Rhea" id="RHEA-COMP:9562"/>
        <dbReference type="ChEBI" id="CHEBI:15378"/>
        <dbReference type="ChEBI" id="CHEBI:17757"/>
        <dbReference type="ChEBI" id="CHEBI:57783"/>
        <dbReference type="ChEBI" id="CHEBI:58349"/>
        <dbReference type="ChEBI" id="CHEBI:62192"/>
    </reaction>
</comment>
<comment type="subunit">
    <text evidence="1">NDH-1 can be composed of about 15 different subunits; different subcomplexes with different compositions have been identified which probably have different functions.</text>
</comment>
<comment type="subcellular location">
    <subcellularLocation>
        <location evidence="1">Cellular thylakoid membrane</location>
        <topology evidence="1">Multi-pass membrane protein</topology>
    </subcellularLocation>
</comment>
<comment type="similarity">
    <text evidence="1">Belongs to the complex I subunit 3 family.</text>
</comment>
<evidence type="ECO:0000255" key="1">
    <source>
        <dbReference type="HAMAP-Rule" id="MF_01394"/>
    </source>
</evidence>
<proteinExistence type="inferred from homology"/>
<feature type="chain" id="PRO_0000362669" description="NAD(P)H-quinone oxidoreductase subunit 3">
    <location>
        <begin position="1"/>
        <end position="120"/>
    </location>
</feature>
<feature type="transmembrane region" description="Helical" evidence="1">
    <location>
        <begin position="7"/>
        <end position="27"/>
    </location>
</feature>
<feature type="transmembrane region" description="Helical" evidence="1">
    <location>
        <begin position="64"/>
        <end position="84"/>
    </location>
</feature>
<feature type="transmembrane region" description="Helical" evidence="1">
    <location>
        <begin position="89"/>
        <end position="109"/>
    </location>
</feature>
<sequence>MFVLNGYEYVLGFLLACSLIPILALTASKILRPSGGGPERRTTYESGMEPIGGAWIQFNIRYYMFALVFVVFDVETVFLYPWAVAFSRLGLLAFVEALIFIAILVVALVYAWRKGALEWS</sequence>
<gene>
    <name evidence="1" type="primary">ndhC</name>
    <name type="ordered locus">cce_1764</name>
</gene>
<protein>
    <recommendedName>
        <fullName evidence="1">NAD(P)H-quinone oxidoreductase subunit 3</fullName>
        <ecNumber evidence="1">7.1.1.-</ecNumber>
    </recommendedName>
    <alternativeName>
        <fullName evidence="1">NAD(P)H dehydrogenase subunit 3</fullName>
    </alternativeName>
    <alternativeName>
        <fullName evidence="1">NADH-plastoquinone oxidoreductase subunit 3</fullName>
    </alternativeName>
    <alternativeName>
        <fullName evidence="1">NDH-1 subunit 3</fullName>
        <shortName evidence="1">NDH-C</shortName>
    </alternativeName>
</protein>
<dbReference type="EC" id="7.1.1.-" evidence="1"/>
<dbReference type="EMBL" id="CP000806">
    <property type="protein sequence ID" value="ACB51114.1"/>
    <property type="molecule type" value="Genomic_DNA"/>
</dbReference>
<dbReference type="RefSeq" id="WP_008275059.1">
    <property type="nucleotide sequence ID" value="NC_010546.1"/>
</dbReference>
<dbReference type="SMR" id="B1WZG2"/>
<dbReference type="STRING" id="43989.cce_1764"/>
<dbReference type="KEGG" id="cyt:cce_1764"/>
<dbReference type="eggNOG" id="COG0838">
    <property type="taxonomic scope" value="Bacteria"/>
</dbReference>
<dbReference type="HOGENOM" id="CLU_119549_1_1_3"/>
<dbReference type="OrthoDB" id="9791970at2"/>
<dbReference type="Proteomes" id="UP000001203">
    <property type="component" value="Chromosome circular"/>
</dbReference>
<dbReference type="GO" id="GO:0030964">
    <property type="term" value="C:NADH dehydrogenase complex"/>
    <property type="evidence" value="ECO:0007669"/>
    <property type="project" value="TreeGrafter"/>
</dbReference>
<dbReference type="GO" id="GO:0031676">
    <property type="term" value="C:plasma membrane-derived thylakoid membrane"/>
    <property type="evidence" value="ECO:0007669"/>
    <property type="project" value="UniProtKB-SubCell"/>
</dbReference>
<dbReference type="GO" id="GO:0008137">
    <property type="term" value="F:NADH dehydrogenase (ubiquinone) activity"/>
    <property type="evidence" value="ECO:0007669"/>
    <property type="project" value="InterPro"/>
</dbReference>
<dbReference type="GO" id="GO:0048038">
    <property type="term" value="F:quinone binding"/>
    <property type="evidence" value="ECO:0007669"/>
    <property type="project" value="UniProtKB-KW"/>
</dbReference>
<dbReference type="GO" id="GO:0019684">
    <property type="term" value="P:photosynthesis, light reaction"/>
    <property type="evidence" value="ECO:0007669"/>
    <property type="project" value="UniProtKB-UniRule"/>
</dbReference>
<dbReference type="FunFam" id="1.20.58.1610:FF:000001">
    <property type="entry name" value="NAD(P)H-quinone oxidoreductase subunit 3, chloroplastic"/>
    <property type="match status" value="1"/>
</dbReference>
<dbReference type="Gene3D" id="1.20.58.1610">
    <property type="entry name" value="NADH:ubiquinone/plastoquinone oxidoreductase, chain 3"/>
    <property type="match status" value="1"/>
</dbReference>
<dbReference type="HAMAP" id="MF_01394">
    <property type="entry name" value="NDH1_NuoA"/>
    <property type="match status" value="1"/>
</dbReference>
<dbReference type="InterPro" id="IPR023043">
    <property type="entry name" value="NAD(P)H_OxRDtase_bac/plastid"/>
</dbReference>
<dbReference type="InterPro" id="IPR000440">
    <property type="entry name" value="NADH_UbQ/plastoQ_OxRdtase_su3"/>
</dbReference>
<dbReference type="InterPro" id="IPR038430">
    <property type="entry name" value="NDAH_ubi_oxred_su3_sf"/>
</dbReference>
<dbReference type="PANTHER" id="PTHR11058">
    <property type="entry name" value="NADH-UBIQUINONE OXIDOREDUCTASE CHAIN 3"/>
    <property type="match status" value="1"/>
</dbReference>
<dbReference type="PANTHER" id="PTHR11058:SF9">
    <property type="entry name" value="NADH-UBIQUINONE OXIDOREDUCTASE CHAIN 3"/>
    <property type="match status" value="1"/>
</dbReference>
<dbReference type="Pfam" id="PF00507">
    <property type="entry name" value="Oxidored_q4"/>
    <property type="match status" value="1"/>
</dbReference>
<organism>
    <name type="scientific">Crocosphaera subtropica (strain ATCC 51142 / BH68)</name>
    <name type="common">Cyanothece sp. (strain ATCC 51142)</name>
    <dbReference type="NCBI Taxonomy" id="43989"/>
    <lineage>
        <taxon>Bacteria</taxon>
        <taxon>Bacillati</taxon>
        <taxon>Cyanobacteriota</taxon>
        <taxon>Cyanophyceae</taxon>
        <taxon>Oscillatoriophycideae</taxon>
        <taxon>Chroococcales</taxon>
        <taxon>Aphanothecaceae</taxon>
        <taxon>Crocosphaera</taxon>
        <taxon>Crocosphaera subtropica</taxon>
    </lineage>
</organism>
<name>NU3C_CROS5</name>